<gene>
    <name type="primary">Cdh20</name>
    <name type="synonym">Cdh7</name>
</gene>
<protein>
    <recommendedName>
        <fullName>Cadherin-20</fullName>
    </recommendedName>
    <alternativeName>
        <fullName>Cadherin-7</fullName>
    </alternativeName>
</protein>
<proteinExistence type="evidence at transcript level"/>
<dbReference type="EMBL" id="AF007116">
    <property type="protein sequence ID" value="AAD01278.1"/>
    <property type="molecule type" value="mRNA"/>
</dbReference>
<dbReference type="EMBL" id="AK034475">
    <property type="protein sequence ID" value="BAC28721.1"/>
    <property type="molecule type" value="mRNA"/>
</dbReference>
<dbReference type="EMBL" id="BC119606">
    <property type="protein sequence ID" value="AAI19607.1"/>
    <property type="molecule type" value="mRNA"/>
</dbReference>
<dbReference type="EMBL" id="BC119607">
    <property type="protein sequence ID" value="AAI19608.1"/>
    <property type="molecule type" value="mRNA"/>
</dbReference>
<dbReference type="CCDS" id="CCDS15203.1"/>
<dbReference type="RefSeq" id="NP_035930.1">
    <property type="nucleotide sequence ID" value="NM_011800.6"/>
</dbReference>
<dbReference type="SMR" id="Q9Z0M3"/>
<dbReference type="FunCoup" id="Q9Z0M3">
    <property type="interactions" value="18"/>
</dbReference>
<dbReference type="STRING" id="10090.ENSMUSP00000052078"/>
<dbReference type="GlyCosmos" id="Q9Z0M3">
    <property type="glycosylation" value="4 sites, No reported glycans"/>
</dbReference>
<dbReference type="GlyGen" id="Q9Z0M3">
    <property type="glycosylation" value="6 sites, 3 N-linked glycans (3 sites), 1 O-linked glycan (2 sites)"/>
</dbReference>
<dbReference type="iPTMnet" id="Q9Z0M3"/>
<dbReference type="PhosphoSitePlus" id="Q9Z0M3"/>
<dbReference type="PaxDb" id="10090-ENSMUSP00000052078"/>
<dbReference type="PeptideAtlas" id="Q9Z0M3"/>
<dbReference type="ProteomicsDB" id="265495"/>
<dbReference type="Antibodypedia" id="2286">
    <property type="antibodies" value="112 antibodies from 26 providers"/>
</dbReference>
<dbReference type="DNASU" id="23836"/>
<dbReference type="Ensembl" id="ENSMUST00000062528.9">
    <property type="protein sequence ID" value="ENSMUSP00000052078.9"/>
    <property type="gene ID" value="ENSMUSG00000050840.9"/>
</dbReference>
<dbReference type="GeneID" id="23836"/>
<dbReference type="KEGG" id="mmu:23836"/>
<dbReference type="UCSC" id="uc007cgc.1">
    <property type="organism name" value="mouse"/>
</dbReference>
<dbReference type="AGR" id="MGI:1346069"/>
<dbReference type="CTD" id="28316"/>
<dbReference type="MGI" id="MGI:1346069">
    <property type="gene designation" value="Cdh20"/>
</dbReference>
<dbReference type="VEuPathDB" id="HostDB:ENSMUSG00000050840"/>
<dbReference type="eggNOG" id="KOG3594">
    <property type="taxonomic scope" value="Eukaryota"/>
</dbReference>
<dbReference type="GeneTree" id="ENSGT00940000158167"/>
<dbReference type="HOGENOM" id="CLU_005284_3_1_1"/>
<dbReference type="InParanoid" id="Q9Z0M3"/>
<dbReference type="OMA" id="MSLYFCG"/>
<dbReference type="OrthoDB" id="6252479at2759"/>
<dbReference type="PhylomeDB" id="Q9Z0M3"/>
<dbReference type="TreeFam" id="TF329887"/>
<dbReference type="BioGRID-ORCS" id="23836">
    <property type="hits" value="0 hits in 78 CRISPR screens"/>
</dbReference>
<dbReference type="ChiTaRS" id="Cdh20">
    <property type="organism name" value="mouse"/>
</dbReference>
<dbReference type="PRO" id="PR:Q9Z0M3"/>
<dbReference type="Proteomes" id="UP000000589">
    <property type="component" value="Chromosome 1"/>
</dbReference>
<dbReference type="RNAct" id="Q9Z0M3">
    <property type="molecule type" value="protein"/>
</dbReference>
<dbReference type="Bgee" id="ENSMUSG00000050840">
    <property type="expression patterns" value="Expressed in ganglionic layer of retina and 85 other cell types or tissues"/>
</dbReference>
<dbReference type="GO" id="GO:0005886">
    <property type="term" value="C:plasma membrane"/>
    <property type="evidence" value="ECO:0007669"/>
    <property type="project" value="UniProtKB-SubCell"/>
</dbReference>
<dbReference type="GO" id="GO:0005509">
    <property type="term" value="F:calcium ion binding"/>
    <property type="evidence" value="ECO:0007669"/>
    <property type="project" value="InterPro"/>
</dbReference>
<dbReference type="GO" id="GO:0007156">
    <property type="term" value="P:homophilic cell adhesion via plasma membrane adhesion molecules"/>
    <property type="evidence" value="ECO:0007669"/>
    <property type="project" value="InterPro"/>
</dbReference>
<dbReference type="CDD" id="cd11304">
    <property type="entry name" value="Cadherin_repeat"/>
    <property type="match status" value="5"/>
</dbReference>
<dbReference type="FunFam" id="4.10.900.10:FF:000001">
    <property type="entry name" value="Cadherin 2"/>
    <property type="match status" value="1"/>
</dbReference>
<dbReference type="FunFam" id="2.60.40.60:FF:000008">
    <property type="entry name" value="Cadherin 24"/>
    <property type="match status" value="1"/>
</dbReference>
<dbReference type="FunFam" id="2.60.40.60:FF:000009">
    <property type="entry name" value="Cadherin 24"/>
    <property type="match status" value="1"/>
</dbReference>
<dbReference type="FunFam" id="2.60.40.60:FF:000012">
    <property type="entry name" value="Cadherin 24"/>
    <property type="match status" value="1"/>
</dbReference>
<dbReference type="FunFam" id="2.60.40.60:FF:000017">
    <property type="entry name" value="Cadherin 24"/>
    <property type="match status" value="1"/>
</dbReference>
<dbReference type="FunFam" id="2.60.40.60:FF:000014">
    <property type="entry name" value="Cadherin 8"/>
    <property type="match status" value="1"/>
</dbReference>
<dbReference type="Gene3D" id="2.60.40.60">
    <property type="entry name" value="Cadherins"/>
    <property type="match status" value="5"/>
</dbReference>
<dbReference type="Gene3D" id="4.10.900.10">
    <property type="entry name" value="TCF3-CBD (Catenin binding domain)"/>
    <property type="match status" value="1"/>
</dbReference>
<dbReference type="InterPro" id="IPR039808">
    <property type="entry name" value="Cadherin"/>
</dbReference>
<dbReference type="InterPro" id="IPR002126">
    <property type="entry name" value="Cadherin-like_dom"/>
</dbReference>
<dbReference type="InterPro" id="IPR015919">
    <property type="entry name" value="Cadherin-like_sf"/>
</dbReference>
<dbReference type="InterPro" id="IPR020894">
    <property type="entry name" value="Cadherin_CS"/>
</dbReference>
<dbReference type="InterPro" id="IPR000233">
    <property type="entry name" value="Cadherin_Y-type_LIR"/>
</dbReference>
<dbReference type="InterPro" id="IPR027397">
    <property type="entry name" value="Catenin-bd_sf"/>
</dbReference>
<dbReference type="PANTHER" id="PTHR24027:SF84">
    <property type="entry name" value="CADHERIN-20"/>
    <property type="match status" value="1"/>
</dbReference>
<dbReference type="PANTHER" id="PTHR24027">
    <property type="entry name" value="CADHERIN-23"/>
    <property type="match status" value="1"/>
</dbReference>
<dbReference type="Pfam" id="PF01049">
    <property type="entry name" value="CADH_Y-type_LIR"/>
    <property type="match status" value="1"/>
</dbReference>
<dbReference type="Pfam" id="PF00028">
    <property type="entry name" value="Cadherin"/>
    <property type="match status" value="5"/>
</dbReference>
<dbReference type="PRINTS" id="PR00205">
    <property type="entry name" value="CADHERIN"/>
</dbReference>
<dbReference type="SMART" id="SM00112">
    <property type="entry name" value="CA"/>
    <property type="match status" value="5"/>
</dbReference>
<dbReference type="SUPFAM" id="SSF49313">
    <property type="entry name" value="Cadherin-like"/>
    <property type="match status" value="5"/>
</dbReference>
<dbReference type="PROSITE" id="PS00232">
    <property type="entry name" value="CADHERIN_1"/>
    <property type="match status" value="3"/>
</dbReference>
<dbReference type="PROSITE" id="PS50268">
    <property type="entry name" value="CADHERIN_2"/>
    <property type="match status" value="5"/>
</dbReference>
<comment type="function">
    <text evidence="1">Cadherins are calcium-dependent cell adhesion proteins. They preferentially interact with themselves in a homophilic manner in connecting cells; cadherins may thus contribute to the sorting of heterogeneous cell types (By similarity).</text>
</comment>
<comment type="subcellular location">
    <subcellularLocation>
        <location evidence="1">Cell membrane</location>
        <topology evidence="1">Single-pass type I membrane protein</topology>
    </subcellularLocation>
</comment>
<comment type="tissue specificity">
    <text evidence="4 5">Expressed in brain. Highest level of expression in the retina. In embryo it is synthesized by the forebrain, anterior neural ridge, developing visual system, primitive external granular layer of the cerebellum and a subset of neural crest cells likely to develop into melanoblasts.</text>
</comment>
<comment type="developmental stage">
    <text evidence="5">Expressed during embryogenesis.</text>
</comment>
<comment type="domain">
    <text evidence="1">Three calcium ions are usually bound at the interface of each cadherin domain and rigidify the connections, imparting a strong curvature to the full-length ectodomain.</text>
</comment>
<accession>Q9Z0M3</accession>
<feature type="signal peptide" evidence="2">
    <location>
        <begin position="1"/>
        <end position="34"/>
    </location>
</feature>
<feature type="propeptide" id="PRO_0000320096" evidence="2">
    <location>
        <begin position="35"/>
        <end position="59"/>
    </location>
</feature>
<feature type="chain" id="PRO_0000320097" description="Cadherin-20">
    <location>
        <begin position="60"/>
        <end position="801"/>
    </location>
</feature>
<feature type="topological domain" description="Extracellular" evidence="2">
    <location>
        <begin position="60"/>
        <end position="619"/>
    </location>
</feature>
<feature type="transmembrane region" description="Helical" evidence="2">
    <location>
        <begin position="620"/>
        <end position="640"/>
    </location>
</feature>
<feature type="topological domain" description="Cytoplasmic" evidence="2">
    <location>
        <begin position="641"/>
        <end position="801"/>
    </location>
</feature>
<feature type="domain" description="Cadherin 1" evidence="3">
    <location>
        <begin position="61"/>
        <end position="165"/>
    </location>
</feature>
<feature type="domain" description="Cadherin 2" evidence="3">
    <location>
        <begin position="166"/>
        <end position="274"/>
    </location>
</feature>
<feature type="domain" description="Cadherin 3" evidence="3">
    <location>
        <begin position="275"/>
        <end position="389"/>
    </location>
</feature>
<feature type="domain" description="Cadherin 4" evidence="3">
    <location>
        <begin position="390"/>
        <end position="494"/>
    </location>
</feature>
<feature type="domain" description="Cadherin 5" evidence="3">
    <location>
        <begin position="494"/>
        <end position="610"/>
    </location>
</feature>
<feature type="glycosylation site" description="N-linked (GlcNAc...) asparagine" evidence="2">
    <location>
        <position position="261"/>
    </location>
</feature>
<feature type="glycosylation site" description="N-linked (GlcNAc...) asparagine" evidence="2">
    <location>
        <position position="420"/>
    </location>
</feature>
<feature type="glycosylation site" description="N-linked (GlcNAc...) asparagine" evidence="2">
    <location>
        <position position="461"/>
    </location>
</feature>
<feature type="glycosylation site" description="N-linked (GlcNAc...) asparagine" evidence="2">
    <location>
        <position position="542"/>
    </location>
</feature>
<reference key="1">
    <citation type="journal article" date="1999" name="Mol. Cell. Neurosci.">
        <title>Cloning and expression of mouse cadherin-7, a type-II cadherin isolated from the developing eye.</title>
        <authorList>
            <person name="Faulkner-Jones B.E."/>
            <person name="Godinho L.N."/>
            <person name="Reese B.E."/>
            <person name="Pasquini G.F."/>
            <person name="Ruefli A."/>
            <person name="Tan S.S."/>
        </authorList>
    </citation>
    <scope>NUCLEOTIDE SEQUENCE [MRNA]</scope>
    <scope>TISSUE SPECIFICITY</scope>
    <source>
        <strain>SWR/J</strain>
        <tissue>Eye</tissue>
    </source>
</reference>
<reference key="2">
    <citation type="journal article" date="2005" name="Science">
        <title>The transcriptional landscape of the mammalian genome.</title>
        <authorList>
            <person name="Carninci P."/>
            <person name="Kasukawa T."/>
            <person name="Katayama S."/>
            <person name="Gough J."/>
            <person name="Frith M.C."/>
            <person name="Maeda N."/>
            <person name="Oyama R."/>
            <person name="Ravasi T."/>
            <person name="Lenhard B."/>
            <person name="Wells C."/>
            <person name="Kodzius R."/>
            <person name="Shimokawa K."/>
            <person name="Bajic V.B."/>
            <person name="Brenner S.E."/>
            <person name="Batalov S."/>
            <person name="Forrest A.R."/>
            <person name="Zavolan M."/>
            <person name="Davis M.J."/>
            <person name="Wilming L.G."/>
            <person name="Aidinis V."/>
            <person name="Allen J.E."/>
            <person name="Ambesi-Impiombato A."/>
            <person name="Apweiler R."/>
            <person name="Aturaliya R.N."/>
            <person name="Bailey T.L."/>
            <person name="Bansal M."/>
            <person name="Baxter L."/>
            <person name="Beisel K.W."/>
            <person name="Bersano T."/>
            <person name="Bono H."/>
            <person name="Chalk A.M."/>
            <person name="Chiu K.P."/>
            <person name="Choudhary V."/>
            <person name="Christoffels A."/>
            <person name="Clutterbuck D.R."/>
            <person name="Crowe M.L."/>
            <person name="Dalla E."/>
            <person name="Dalrymple B.P."/>
            <person name="de Bono B."/>
            <person name="Della Gatta G."/>
            <person name="di Bernardo D."/>
            <person name="Down T."/>
            <person name="Engstrom P."/>
            <person name="Fagiolini M."/>
            <person name="Faulkner G."/>
            <person name="Fletcher C.F."/>
            <person name="Fukushima T."/>
            <person name="Furuno M."/>
            <person name="Futaki S."/>
            <person name="Gariboldi M."/>
            <person name="Georgii-Hemming P."/>
            <person name="Gingeras T.R."/>
            <person name="Gojobori T."/>
            <person name="Green R.E."/>
            <person name="Gustincich S."/>
            <person name="Harbers M."/>
            <person name="Hayashi Y."/>
            <person name="Hensch T.K."/>
            <person name="Hirokawa N."/>
            <person name="Hill D."/>
            <person name="Huminiecki L."/>
            <person name="Iacono M."/>
            <person name="Ikeo K."/>
            <person name="Iwama A."/>
            <person name="Ishikawa T."/>
            <person name="Jakt M."/>
            <person name="Kanapin A."/>
            <person name="Katoh M."/>
            <person name="Kawasawa Y."/>
            <person name="Kelso J."/>
            <person name="Kitamura H."/>
            <person name="Kitano H."/>
            <person name="Kollias G."/>
            <person name="Krishnan S.P."/>
            <person name="Kruger A."/>
            <person name="Kummerfeld S.K."/>
            <person name="Kurochkin I.V."/>
            <person name="Lareau L.F."/>
            <person name="Lazarevic D."/>
            <person name="Lipovich L."/>
            <person name="Liu J."/>
            <person name="Liuni S."/>
            <person name="McWilliam S."/>
            <person name="Madan Babu M."/>
            <person name="Madera M."/>
            <person name="Marchionni L."/>
            <person name="Matsuda H."/>
            <person name="Matsuzawa S."/>
            <person name="Miki H."/>
            <person name="Mignone F."/>
            <person name="Miyake S."/>
            <person name="Morris K."/>
            <person name="Mottagui-Tabar S."/>
            <person name="Mulder N."/>
            <person name="Nakano N."/>
            <person name="Nakauchi H."/>
            <person name="Ng P."/>
            <person name="Nilsson R."/>
            <person name="Nishiguchi S."/>
            <person name="Nishikawa S."/>
            <person name="Nori F."/>
            <person name="Ohara O."/>
            <person name="Okazaki Y."/>
            <person name="Orlando V."/>
            <person name="Pang K.C."/>
            <person name="Pavan W.J."/>
            <person name="Pavesi G."/>
            <person name="Pesole G."/>
            <person name="Petrovsky N."/>
            <person name="Piazza S."/>
            <person name="Reed J."/>
            <person name="Reid J.F."/>
            <person name="Ring B.Z."/>
            <person name="Ringwald M."/>
            <person name="Rost B."/>
            <person name="Ruan Y."/>
            <person name="Salzberg S.L."/>
            <person name="Sandelin A."/>
            <person name="Schneider C."/>
            <person name="Schoenbach C."/>
            <person name="Sekiguchi K."/>
            <person name="Semple C.A."/>
            <person name="Seno S."/>
            <person name="Sessa L."/>
            <person name="Sheng Y."/>
            <person name="Shibata Y."/>
            <person name="Shimada H."/>
            <person name="Shimada K."/>
            <person name="Silva D."/>
            <person name="Sinclair B."/>
            <person name="Sperling S."/>
            <person name="Stupka E."/>
            <person name="Sugiura K."/>
            <person name="Sultana R."/>
            <person name="Takenaka Y."/>
            <person name="Taki K."/>
            <person name="Tammoja K."/>
            <person name="Tan S.L."/>
            <person name="Tang S."/>
            <person name="Taylor M.S."/>
            <person name="Tegner J."/>
            <person name="Teichmann S.A."/>
            <person name="Ueda H.R."/>
            <person name="van Nimwegen E."/>
            <person name="Verardo R."/>
            <person name="Wei C.L."/>
            <person name="Yagi K."/>
            <person name="Yamanishi H."/>
            <person name="Zabarovsky E."/>
            <person name="Zhu S."/>
            <person name="Zimmer A."/>
            <person name="Hide W."/>
            <person name="Bult C."/>
            <person name="Grimmond S.M."/>
            <person name="Teasdale R.D."/>
            <person name="Liu E.T."/>
            <person name="Brusic V."/>
            <person name="Quackenbush J."/>
            <person name="Wahlestedt C."/>
            <person name="Mattick J.S."/>
            <person name="Hume D.A."/>
            <person name="Kai C."/>
            <person name="Sasaki D."/>
            <person name="Tomaru Y."/>
            <person name="Fukuda S."/>
            <person name="Kanamori-Katayama M."/>
            <person name="Suzuki M."/>
            <person name="Aoki J."/>
            <person name="Arakawa T."/>
            <person name="Iida J."/>
            <person name="Imamura K."/>
            <person name="Itoh M."/>
            <person name="Kato T."/>
            <person name="Kawaji H."/>
            <person name="Kawagashira N."/>
            <person name="Kawashima T."/>
            <person name="Kojima M."/>
            <person name="Kondo S."/>
            <person name="Konno H."/>
            <person name="Nakano K."/>
            <person name="Ninomiya N."/>
            <person name="Nishio T."/>
            <person name="Okada M."/>
            <person name="Plessy C."/>
            <person name="Shibata K."/>
            <person name="Shiraki T."/>
            <person name="Suzuki S."/>
            <person name="Tagami M."/>
            <person name="Waki K."/>
            <person name="Watahiki A."/>
            <person name="Okamura-Oho Y."/>
            <person name="Suzuki H."/>
            <person name="Kawai J."/>
            <person name="Hayashizaki Y."/>
        </authorList>
    </citation>
    <scope>NUCLEOTIDE SEQUENCE [LARGE SCALE MRNA]</scope>
    <source>
        <strain>C57BL/6J</strain>
        <tissue>Diencephalon</tissue>
    </source>
</reference>
<reference key="3">
    <citation type="journal article" date="2004" name="Genome Res.">
        <title>The status, quality, and expansion of the NIH full-length cDNA project: the Mammalian Gene Collection (MGC).</title>
        <authorList>
            <consortium name="The MGC Project Team"/>
        </authorList>
    </citation>
    <scope>NUCLEOTIDE SEQUENCE [LARGE SCALE MRNA]</scope>
</reference>
<reference key="4">
    <citation type="journal article" date="2004" name="Oncogene">
        <title>Involvement of cadherins 7 and 20 in mouse embryogenesis and melanocyte transformation.</title>
        <authorList>
            <person name="Moore R."/>
            <person name="Champeval D."/>
            <person name="Denat L."/>
            <person name="Tan S.S."/>
            <person name="Faure F."/>
            <person name="Julien-Grille S."/>
            <person name="Larue L."/>
        </authorList>
    </citation>
    <scope>TISSUE SPECIFICITY</scope>
    <scope>DEVELOPMENTAL STAGE</scope>
    <source>
        <strain>BALB/cJ</strain>
    </source>
</reference>
<evidence type="ECO:0000250" key="1"/>
<evidence type="ECO:0000255" key="2"/>
<evidence type="ECO:0000255" key="3">
    <source>
        <dbReference type="PROSITE-ProRule" id="PRU00043"/>
    </source>
</evidence>
<evidence type="ECO:0000269" key="4">
    <source>
    </source>
</evidence>
<evidence type="ECO:0000269" key="5">
    <source>
    </source>
</evidence>
<organism>
    <name type="scientific">Mus musculus</name>
    <name type="common">Mouse</name>
    <dbReference type="NCBI Taxonomy" id="10090"/>
    <lineage>
        <taxon>Eukaryota</taxon>
        <taxon>Metazoa</taxon>
        <taxon>Chordata</taxon>
        <taxon>Craniata</taxon>
        <taxon>Vertebrata</taxon>
        <taxon>Euteleostomi</taxon>
        <taxon>Mammalia</taxon>
        <taxon>Eutheria</taxon>
        <taxon>Euarchontoglires</taxon>
        <taxon>Glires</taxon>
        <taxon>Rodentia</taxon>
        <taxon>Myomorpha</taxon>
        <taxon>Muroidea</taxon>
        <taxon>Muridae</taxon>
        <taxon>Murinae</taxon>
        <taxon>Mus</taxon>
        <taxon>Mus</taxon>
    </lineage>
</organism>
<sequence>MWTTGRMSNAKSWLGLGTSLYFWALMDLTATVLSSTPMPEVELETLFSGRSQSHQRSKRSWVWNQFFVLEEYTGTDPLYVGKLHSDMDRGDGSIKYILSGEGAGIVFTIDDTTGDIHAIQRLDREERAQYTLRAQALDRRTGRPMEPESEFIIKIQDINDNEPKFLDGPYIATVPEMSPVGTSVIQVTATDADDPTYGNSARVVYSILQGQPYFSVDSKTGVIRTALMNMDREAKEYYEVIIQAKDMGGQLGGLAGTTTVNITLSDVNDNPPRFPQKHYQMSVLESAPISSTVGRVFAKDLDEGINAEMKYTIVDGDGADAFDINTDQNFQVGIITVKKPLSFESKKSYTLKVEGSNPHLEMRFLNLGPFQDTTTVHISVEDVDEPPVFEPGFYFVEVPEDVTIGTTIQIISAKDPDVTNNSIRYSIDRGSDPGRFFYVDITTGALMTARPLDREEFSWHNITVLAMEMNNPSQVGSVAVTIKVLDVNDNAPEFPRFYEAFICENAKAGQLIQTVSAVDQDDPHNGQHFYYSLAPEAANNPNFTVRDNQDNTARILTRRSGFRQQEQSVFYLPILIADSGQPVLSSTGTLTIQVCSCNDDGHVMSCSPEAYLLPVSLSRGALIAILACIFVLLVLVLLILSMRRHRKQPYIIDDDENIHENIVRYDDEGGGEEDTEAFDIAAMWNPREAQAGAAPKTRQDMLPEIESLSRYVPQTCAVSSTVHSYVLAKLYEADMDLWAPPFDSLQTYMFEGDGSVAGSLSSLQSATSDSEQSFDFLTDWGPRFRKLAELYGASEGPAPLW</sequence>
<keyword id="KW-0106">Calcium</keyword>
<keyword id="KW-0130">Cell adhesion</keyword>
<keyword id="KW-1003">Cell membrane</keyword>
<keyword id="KW-0165">Cleavage on pair of basic residues</keyword>
<keyword id="KW-0325">Glycoprotein</keyword>
<keyword id="KW-0472">Membrane</keyword>
<keyword id="KW-0479">Metal-binding</keyword>
<keyword id="KW-1185">Reference proteome</keyword>
<keyword id="KW-0677">Repeat</keyword>
<keyword id="KW-0732">Signal</keyword>
<keyword id="KW-0812">Transmembrane</keyword>
<keyword id="KW-1133">Transmembrane helix</keyword>
<name>CAD20_MOUSE</name>